<evidence type="ECO:0000255" key="1">
    <source>
        <dbReference type="HAMAP-Rule" id="MF_01542"/>
    </source>
</evidence>
<dbReference type="EMBL" id="AE016879">
    <property type="protein sequence ID" value="AAP28841.1"/>
    <property type="molecule type" value="Genomic_DNA"/>
</dbReference>
<dbReference type="EMBL" id="AE017334">
    <property type="protein sequence ID" value="AAT34302.1"/>
    <property type="molecule type" value="Genomic_DNA"/>
</dbReference>
<dbReference type="EMBL" id="AE017225">
    <property type="protein sequence ID" value="AAT57100.1"/>
    <property type="molecule type" value="Genomic_DNA"/>
</dbReference>
<dbReference type="RefSeq" id="NP_847355.1">
    <property type="nucleotide sequence ID" value="NC_003997.3"/>
</dbReference>
<dbReference type="RefSeq" id="WP_000595026.1">
    <property type="nucleotide sequence ID" value="NZ_WXXJ01000017.1"/>
</dbReference>
<dbReference type="RefSeq" id="YP_031050.1">
    <property type="nucleotide sequence ID" value="NC_005945.1"/>
</dbReference>
<dbReference type="SMR" id="Q81XR1"/>
<dbReference type="IntAct" id="Q81XR1">
    <property type="interactions" value="3"/>
</dbReference>
<dbReference type="STRING" id="261594.GBAA_5172"/>
<dbReference type="DNASU" id="1084135"/>
<dbReference type="KEGG" id="ban:BA_5172"/>
<dbReference type="KEGG" id="bar:GBAA_5172"/>
<dbReference type="KEGG" id="bat:BAS4807"/>
<dbReference type="PATRIC" id="fig|198094.11.peg.5133"/>
<dbReference type="eggNOG" id="COG4844">
    <property type="taxonomic scope" value="Bacteria"/>
</dbReference>
<dbReference type="HOGENOM" id="CLU_182025_0_0_9"/>
<dbReference type="OMA" id="YDVIEYG"/>
<dbReference type="OrthoDB" id="1684419at2"/>
<dbReference type="Proteomes" id="UP000000427">
    <property type="component" value="Chromosome"/>
</dbReference>
<dbReference type="Proteomes" id="UP000000594">
    <property type="component" value="Chromosome"/>
</dbReference>
<dbReference type="HAMAP" id="MF_01542">
    <property type="entry name" value="UPF0349"/>
    <property type="match status" value="1"/>
</dbReference>
<dbReference type="InterPro" id="IPR009910">
    <property type="entry name" value="DUF1450"/>
</dbReference>
<dbReference type="InterPro" id="IPR022916">
    <property type="entry name" value="UPF0349"/>
</dbReference>
<dbReference type="NCBIfam" id="NF010190">
    <property type="entry name" value="PRK13669.1"/>
    <property type="match status" value="1"/>
</dbReference>
<dbReference type="Pfam" id="PF07293">
    <property type="entry name" value="DUF1450"/>
    <property type="match status" value="1"/>
</dbReference>
<feature type="chain" id="PRO_0000165881" description="UPF0349 protein BA_5172/GBAA_5172/BAS4807">
    <location>
        <begin position="1"/>
        <end position="79"/>
    </location>
</feature>
<reference key="1">
    <citation type="journal article" date="2003" name="Nature">
        <title>The genome sequence of Bacillus anthracis Ames and comparison to closely related bacteria.</title>
        <authorList>
            <person name="Read T.D."/>
            <person name="Peterson S.N."/>
            <person name="Tourasse N.J."/>
            <person name="Baillie L.W."/>
            <person name="Paulsen I.T."/>
            <person name="Nelson K.E."/>
            <person name="Tettelin H."/>
            <person name="Fouts D.E."/>
            <person name="Eisen J.A."/>
            <person name="Gill S.R."/>
            <person name="Holtzapple E.K."/>
            <person name="Okstad O.A."/>
            <person name="Helgason E."/>
            <person name="Rilstone J."/>
            <person name="Wu M."/>
            <person name="Kolonay J.F."/>
            <person name="Beanan M.J."/>
            <person name="Dodson R.J."/>
            <person name="Brinkac L.M."/>
            <person name="Gwinn M.L."/>
            <person name="DeBoy R.T."/>
            <person name="Madpu R."/>
            <person name="Daugherty S.C."/>
            <person name="Durkin A.S."/>
            <person name="Haft D.H."/>
            <person name="Nelson W.C."/>
            <person name="Peterson J.D."/>
            <person name="Pop M."/>
            <person name="Khouri H.M."/>
            <person name="Radune D."/>
            <person name="Benton J.L."/>
            <person name="Mahamoud Y."/>
            <person name="Jiang L."/>
            <person name="Hance I.R."/>
            <person name="Weidman J.F."/>
            <person name="Berry K.J."/>
            <person name="Plaut R.D."/>
            <person name="Wolf A.M."/>
            <person name="Watkins K.L."/>
            <person name="Nierman W.C."/>
            <person name="Hazen A."/>
            <person name="Cline R.T."/>
            <person name="Redmond C."/>
            <person name="Thwaite J.E."/>
            <person name="White O."/>
            <person name="Salzberg S.L."/>
            <person name="Thomason B."/>
            <person name="Friedlander A.M."/>
            <person name="Koehler T.M."/>
            <person name="Hanna P.C."/>
            <person name="Kolstoe A.-B."/>
            <person name="Fraser C.M."/>
        </authorList>
    </citation>
    <scope>NUCLEOTIDE SEQUENCE [LARGE SCALE GENOMIC DNA]</scope>
    <source>
        <strain>Ames / isolate Porton</strain>
    </source>
</reference>
<reference key="2">
    <citation type="journal article" date="2009" name="J. Bacteriol.">
        <title>The complete genome sequence of Bacillus anthracis Ames 'Ancestor'.</title>
        <authorList>
            <person name="Ravel J."/>
            <person name="Jiang L."/>
            <person name="Stanley S.T."/>
            <person name="Wilson M.R."/>
            <person name="Decker R.S."/>
            <person name="Read T.D."/>
            <person name="Worsham P."/>
            <person name="Keim P.S."/>
            <person name="Salzberg S.L."/>
            <person name="Fraser-Liggett C.M."/>
            <person name="Rasko D.A."/>
        </authorList>
    </citation>
    <scope>NUCLEOTIDE SEQUENCE [LARGE SCALE GENOMIC DNA]</scope>
    <source>
        <strain>Ames ancestor</strain>
    </source>
</reference>
<reference key="3">
    <citation type="submission" date="2004-01" db="EMBL/GenBank/DDBJ databases">
        <title>Complete genome sequence of Bacillus anthracis Sterne.</title>
        <authorList>
            <person name="Brettin T.S."/>
            <person name="Bruce D."/>
            <person name="Challacombe J.F."/>
            <person name="Gilna P."/>
            <person name="Han C."/>
            <person name="Hill K."/>
            <person name="Hitchcock P."/>
            <person name="Jackson P."/>
            <person name="Keim P."/>
            <person name="Longmire J."/>
            <person name="Lucas S."/>
            <person name="Okinaka R."/>
            <person name="Richardson P."/>
            <person name="Rubin E."/>
            <person name="Tice H."/>
        </authorList>
    </citation>
    <scope>NUCLEOTIDE SEQUENCE [LARGE SCALE GENOMIC DNA]</scope>
    <source>
        <strain>Sterne</strain>
    </source>
</reference>
<gene>
    <name type="ordered locus">BA_5172</name>
    <name type="ordered locus">GBAA_5172</name>
    <name type="ordered locus">BAS4807</name>
</gene>
<keyword id="KW-1185">Reference proteome</keyword>
<accession>Q81XR1</accession>
<accession>Q6HRI8</accession>
<accession>Q6KKV5</accession>
<proteinExistence type="inferred from homology"/>
<protein>
    <recommendedName>
        <fullName evidence="1">UPF0349 protein BA_5172/GBAA_5172/BAS4807</fullName>
    </recommendedName>
</protein>
<comment type="similarity">
    <text evidence="1">Belongs to the UPF0349 family.</text>
</comment>
<sequence length="79" mass="8654">MIKPLIEFCVGNLASGSQAALEKLEKDPNLDVMEYGCLGYCGICFEGPFALVNGEVVQGATVEELVNNVYEYLDENPMF</sequence>
<name>Y5172_BACAN</name>
<organism>
    <name type="scientific">Bacillus anthracis</name>
    <dbReference type="NCBI Taxonomy" id="1392"/>
    <lineage>
        <taxon>Bacteria</taxon>
        <taxon>Bacillati</taxon>
        <taxon>Bacillota</taxon>
        <taxon>Bacilli</taxon>
        <taxon>Bacillales</taxon>
        <taxon>Bacillaceae</taxon>
        <taxon>Bacillus</taxon>
        <taxon>Bacillus cereus group</taxon>
    </lineage>
</organism>